<feature type="chain" id="PRO_0000428491" description="Decaprenyl-phosphate phosphoribosyltransferase">
    <location>
        <begin position="1"/>
        <end position="302"/>
    </location>
</feature>
<feature type="transmembrane region" description="Helical" evidence="2">
    <location>
        <begin position="30"/>
        <end position="50"/>
    </location>
</feature>
<feature type="transmembrane region" description="Helical" evidence="2">
    <location>
        <begin position="55"/>
        <end position="75"/>
    </location>
</feature>
<feature type="transmembrane region" description="Helical" evidence="2">
    <location>
        <begin position="100"/>
        <end position="120"/>
    </location>
</feature>
<feature type="transmembrane region" description="Helical" evidence="2">
    <location>
        <begin position="122"/>
        <end position="142"/>
    </location>
</feature>
<feature type="transmembrane region" description="Helical" evidence="2">
    <location>
        <begin position="146"/>
        <end position="166"/>
    </location>
</feature>
<feature type="transmembrane region" description="Helical" evidence="2">
    <location>
        <begin position="170"/>
        <end position="190"/>
    </location>
</feature>
<feature type="transmembrane region" description="Helical" evidence="2">
    <location>
        <begin position="218"/>
        <end position="238"/>
    </location>
</feature>
<feature type="transmembrane region" description="Helical" evidence="2">
    <location>
        <begin position="244"/>
        <end position="264"/>
    </location>
</feature>
<feature type="transmembrane region" description="Helical" evidence="2">
    <location>
        <begin position="282"/>
        <end position="302"/>
    </location>
</feature>
<feature type="binding site" evidence="1">
    <location>
        <position position="28"/>
    </location>
    <ligand>
        <name>5-phospho-alpha-D-ribose 1-diphosphate</name>
        <dbReference type="ChEBI" id="CHEBI:58017"/>
    </ligand>
</feature>
<feature type="binding site" evidence="1">
    <location>
        <position position="70"/>
    </location>
    <ligand>
        <name>5-phospho-alpha-D-ribose 1-diphosphate</name>
        <dbReference type="ChEBI" id="CHEBI:58017"/>
    </ligand>
</feature>
<feature type="binding site" evidence="1">
    <location>
        <position position="73"/>
    </location>
    <ligand>
        <name>Mg(2+)</name>
        <dbReference type="ChEBI" id="CHEBI:18420"/>
    </ligand>
</feature>
<feature type="binding site" evidence="1">
    <location>
        <position position="77"/>
    </location>
    <ligand>
        <name>Mg(2+)</name>
        <dbReference type="ChEBI" id="CHEBI:18420"/>
    </ligand>
</feature>
<feature type="binding site" evidence="1">
    <location>
        <position position="87"/>
    </location>
    <ligand>
        <name>5-phospho-alpha-D-ribose 1-diphosphate</name>
        <dbReference type="ChEBI" id="CHEBI:58017"/>
    </ligand>
</feature>
<feature type="binding site" evidence="1">
    <location>
        <position position="143"/>
    </location>
    <ligand>
        <name>5-phospho-alpha-D-ribose 1-diphosphate</name>
        <dbReference type="ChEBI" id="CHEBI:58017"/>
    </ligand>
</feature>
<feature type="binding site" evidence="1">
    <location>
        <position position="160"/>
    </location>
    <ligand>
        <name>5-phospho-alpha-D-ribose 1-diphosphate</name>
        <dbReference type="ChEBI" id="CHEBI:58017"/>
    </ligand>
</feature>
<feature type="binding site" evidence="1">
    <location>
        <position position="191"/>
    </location>
    <ligand>
        <name>trans,octa-cis-decaprenyl phosphate</name>
        <dbReference type="ChEBI" id="CHEBI:65079"/>
    </ligand>
</feature>
<sequence length="302" mass="32654">MSEDVVTQPPANLVAGVVKAIRPRQWVKNVLVLAAPLAALGGGVRYDYVEVLSKVSMAFVVFSLAASAVYLVNDVRDVEADREHPTKRFRPIAAGVVPEWLAYTVAVVLGVTSLAGAWMLTPNLALVMVVYLAMQLAYCFGLKHQAVVEICVVSSAYLIRAIAGGVATKIPLSKWFLLIMAFGSLFMVAGKRYAELHLAERTGAAIRKSLESYTSTYLRFVWTLSATAVVLCYGLWAFERDGYSGSWFAVSMIPFTIAILRYAVDVDGGLAGEPEDIALRDRVLQLLALAWIATVGAAVAFG</sequence>
<dbReference type="EC" id="2.4.2.45" evidence="1"/>
<dbReference type="EMBL" id="AE000516">
    <property type="protein sequence ID" value="AAK48279.1"/>
    <property type="molecule type" value="Genomic_DNA"/>
</dbReference>
<dbReference type="PIR" id="B70888">
    <property type="entry name" value="B70888"/>
</dbReference>
<dbReference type="RefSeq" id="WP_003899704.1">
    <property type="nucleotide sequence ID" value="NZ_KK341227.1"/>
</dbReference>
<dbReference type="SMR" id="P9WFR4"/>
<dbReference type="KEGG" id="mtc:MT3913"/>
<dbReference type="PATRIC" id="fig|83331.31.peg.4210"/>
<dbReference type="HOGENOM" id="CLU_029423_0_0_11"/>
<dbReference type="UniPathway" id="UPA00963"/>
<dbReference type="Proteomes" id="UP000001020">
    <property type="component" value="Chromosome"/>
</dbReference>
<dbReference type="GO" id="GO:0005886">
    <property type="term" value="C:plasma membrane"/>
    <property type="evidence" value="ECO:0007669"/>
    <property type="project" value="UniProtKB-SubCell"/>
</dbReference>
<dbReference type="GO" id="GO:0046872">
    <property type="term" value="F:metal ion binding"/>
    <property type="evidence" value="ECO:0007669"/>
    <property type="project" value="UniProtKB-KW"/>
</dbReference>
<dbReference type="GO" id="GO:0016765">
    <property type="term" value="F:transferase activity, transferring alkyl or aryl (other than methyl) groups"/>
    <property type="evidence" value="ECO:0007669"/>
    <property type="project" value="InterPro"/>
</dbReference>
<dbReference type="GO" id="GO:0045227">
    <property type="term" value="P:capsule polysaccharide biosynthetic process"/>
    <property type="evidence" value="ECO:0007669"/>
    <property type="project" value="UniProtKB-UniPathway"/>
</dbReference>
<dbReference type="GO" id="GO:0071555">
    <property type="term" value="P:cell wall organization"/>
    <property type="evidence" value="ECO:0007669"/>
    <property type="project" value="UniProtKB-KW"/>
</dbReference>
<dbReference type="CDD" id="cd13963">
    <property type="entry name" value="PT_UbiA_2"/>
    <property type="match status" value="1"/>
</dbReference>
<dbReference type="FunFam" id="1.10.357.140:FF:000017">
    <property type="entry name" value="Decaprenyl-phosphate phosphoribosyltransferase"/>
    <property type="match status" value="1"/>
</dbReference>
<dbReference type="Gene3D" id="1.10.357.140">
    <property type="entry name" value="UbiA prenyltransferase"/>
    <property type="match status" value="1"/>
</dbReference>
<dbReference type="InterPro" id="IPR000537">
    <property type="entry name" value="UbiA_prenyltransferase"/>
</dbReference>
<dbReference type="InterPro" id="IPR044878">
    <property type="entry name" value="UbiA_sf"/>
</dbReference>
<dbReference type="NCBIfam" id="NF008976">
    <property type="entry name" value="PRK12324.1-1"/>
    <property type="match status" value="1"/>
</dbReference>
<dbReference type="NCBIfam" id="NF008978">
    <property type="entry name" value="PRK12324.1-4"/>
    <property type="match status" value="1"/>
</dbReference>
<dbReference type="Pfam" id="PF01040">
    <property type="entry name" value="UbiA"/>
    <property type="match status" value="1"/>
</dbReference>
<proteinExistence type="inferred from homology"/>
<organism>
    <name type="scientific">Mycobacterium tuberculosis (strain CDC 1551 / Oshkosh)</name>
    <dbReference type="NCBI Taxonomy" id="83331"/>
    <lineage>
        <taxon>Bacteria</taxon>
        <taxon>Bacillati</taxon>
        <taxon>Actinomycetota</taxon>
        <taxon>Actinomycetes</taxon>
        <taxon>Mycobacteriales</taxon>
        <taxon>Mycobacteriaceae</taxon>
        <taxon>Mycobacterium</taxon>
        <taxon>Mycobacterium tuberculosis complex</taxon>
    </lineage>
</organism>
<reference key="1">
    <citation type="journal article" date="2002" name="J. Bacteriol.">
        <title>Whole-genome comparison of Mycobacterium tuberculosis clinical and laboratory strains.</title>
        <authorList>
            <person name="Fleischmann R.D."/>
            <person name="Alland D."/>
            <person name="Eisen J.A."/>
            <person name="Carpenter L."/>
            <person name="White O."/>
            <person name="Peterson J.D."/>
            <person name="DeBoy R.T."/>
            <person name="Dodson R.J."/>
            <person name="Gwinn M.L."/>
            <person name="Haft D.H."/>
            <person name="Hickey E.K."/>
            <person name="Kolonay J.F."/>
            <person name="Nelson W.C."/>
            <person name="Umayam L.A."/>
            <person name="Ermolaeva M.D."/>
            <person name="Salzberg S.L."/>
            <person name="Delcher A."/>
            <person name="Utterback T.R."/>
            <person name="Weidman J.F."/>
            <person name="Khouri H.M."/>
            <person name="Gill J."/>
            <person name="Mikula A."/>
            <person name="Bishai W."/>
            <person name="Jacobs W.R. Jr."/>
            <person name="Venter J.C."/>
            <person name="Fraser C.M."/>
        </authorList>
    </citation>
    <scope>NUCLEOTIDE SEQUENCE [LARGE SCALE GENOMIC DNA]</scope>
    <source>
        <strain>CDC 1551 / Oshkosh</strain>
    </source>
</reference>
<evidence type="ECO:0000250" key="1">
    <source>
        <dbReference type="UniProtKB" id="P9WFR5"/>
    </source>
</evidence>
<evidence type="ECO:0000255" key="2"/>
<evidence type="ECO:0000305" key="3"/>
<comment type="function">
    <text evidence="1">Involved in the biosynthesis of decaprenylphosphoryl arabinose (DPA) a precursor for arabinan synthesis in mycobacterial cell wall biosynthesis (By similarity). Catalyzes the transfer of a 5-phosphoribosyl residue from phosphoribose diphosphate (PRPP) to decaprenyl phosphate (DP) to form decaprenylphosphoryl-5-phosphoribose (DPPR) (By similarity).</text>
</comment>
<comment type="catalytic activity">
    <reaction evidence="1">
        <text>trans,octa-cis-decaprenyl phosphate + 5-phospho-alpha-D-ribose 1-diphosphate + H(+) = trans,octa-cis-decaprenylphospho-beta-D-ribofuranose 5-phosphate + diphosphate</text>
        <dbReference type="Rhea" id="RHEA:34067"/>
        <dbReference type="ChEBI" id="CHEBI:15378"/>
        <dbReference type="ChEBI" id="CHEBI:33019"/>
        <dbReference type="ChEBI" id="CHEBI:58017"/>
        <dbReference type="ChEBI" id="CHEBI:65079"/>
        <dbReference type="ChEBI" id="CHEBI:66937"/>
        <dbReference type="EC" id="2.4.2.45"/>
    </reaction>
    <physiologicalReaction direction="left-to-right" evidence="1">
        <dbReference type="Rhea" id="RHEA:34068"/>
    </physiologicalReaction>
</comment>
<comment type="cofactor">
    <cofactor evidence="1">
        <name>Mg(2+)</name>
        <dbReference type="ChEBI" id="CHEBI:18420"/>
    </cofactor>
</comment>
<comment type="pathway">
    <text evidence="1">Cell wall biogenesis; cell wall polysaccharide biosynthesis.</text>
</comment>
<comment type="subunit">
    <text evidence="1">Homotrimer.</text>
</comment>
<comment type="subcellular location">
    <subcellularLocation>
        <location evidence="1">Cell inner membrane</location>
        <topology evidence="2">Multi-pass membrane protein</topology>
    </subcellularLocation>
</comment>
<comment type="similarity">
    <text evidence="3">Belongs to the UbiA prenyltransferase family. DPPR synthase subfamily.</text>
</comment>
<gene>
    <name type="ordered locus">MT3913</name>
</gene>
<accession>P9WFR4</accession>
<accession>F2GDG5</accession>
<accession>L0TGT7</accession>
<accession>O53583</accession>
<accession>Q7D4U6</accession>
<keyword id="KW-0997">Cell inner membrane</keyword>
<keyword id="KW-1003">Cell membrane</keyword>
<keyword id="KW-0961">Cell wall biogenesis/degradation</keyword>
<keyword id="KW-0460">Magnesium</keyword>
<keyword id="KW-0472">Membrane</keyword>
<keyword id="KW-0479">Metal-binding</keyword>
<keyword id="KW-1185">Reference proteome</keyword>
<keyword id="KW-0808">Transferase</keyword>
<keyword id="KW-0812">Transmembrane</keyword>
<keyword id="KW-1133">Transmembrane helix</keyword>
<protein>
    <recommendedName>
        <fullName evidence="1">Decaprenyl-phosphate phosphoribosyltransferase</fullName>
        <ecNumber evidence="1">2.4.2.45</ecNumber>
    </recommendedName>
    <alternativeName>
        <fullName evidence="1">5-phospho-alpha-D-ribose-1-diphosphate:decaprenyl-phosphate 5-phosphoribosyltransferase</fullName>
    </alternativeName>
    <alternativeName>
        <fullName evidence="1">DPPR synthase</fullName>
    </alternativeName>
</protein>
<name>DPPRS_MYCTO</name>